<gene>
    <name type="primary">rpl36</name>
</gene>
<feature type="chain" id="PRO_0000126336" description="Large ribosomal subunit protein bL36c">
    <location>
        <begin position="1"/>
        <end position="37"/>
    </location>
</feature>
<evidence type="ECO:0000305" key="1"/>
<accession>P07815</accession>
<keyword id="KW-0150">Chloroplast</keyword>
<keyword id="KW-0934">Plastid</keyword>
<keyword id="KW-0687">Ribonucleoprotein</keyword>
<keyword id="KW-0689">Ribosomal protein</keyword>
<sequence length="37" mass="4333">MKVAASVRKICEKCRLIRRRGRLLVICSNPKHKQRQG</sequence>
<name>RK36_PEA</name>
<geneLocation type="chloroplast"/>
<reference key="1">
    <citation type="journal article" date="1987" name="Nucleic Acids Res.">
        <title>Nucleotide sequence of the gene for ribosomal protein L36 in pea chloroplast DNA.</title>
        <authorList>
            <person name="Purton S."/>
            <person name="Gray J.C."/>
        </authorList>
    </citation>
    <scope>NUCLEOTIDE SEQUENCE [GENOMIC DNA]</scope>
</reference>
<reference key="2">
    <citation type="journal article" date="1989" name="Mol. Gen. Genet.">
        <title>The plastid rpoA gene encoding a protein homologous to the bacterial RNA polymerase alpha subunit is expressed in pea chloroplasts.</title>
        <authorList>
            <person name="Purton S."/>
            <person name="Gray J.C."/>
        </authorList>
    </citation>
    <scope>NUCLEOTIDE SEQUENCE [GENOMIC DNA] OF 22-37</scope>
    <source>
        <strain>cv. Alaska</strain>
    </source>
</reference>
<protein>
    <recommendedName>
        <fullName evidence="1">Large ribosomal subunit protein bL36c</fullName>
    </recommendedName>
    <alternativeName>
        <fullName>50S ribosomal protein L36, chloroplastic</fullName>
    </alternativeName>
</protein>
<proteinExistence type="inferred from homology"/>
<organism>
    <name type="scientific">Pisum sativum</name>
    <name type="common">Garden pea</name>
    <name type="synonym">Lathyrus oleraceus</name>
    <dbReference type="NCBI Taxonomy" id="3888"/>
    <lineage>
        <taxon>Eukaryota</taxon>
        <taxon>Viridiplantae</taxon>
        <taxon>Streptophyta</taxon>
        <taxon>Embryophyta</taxon>
        <taxon>Tracheophyta</taxon>
        <taxon>Spermatophyta</taxon>
        <taxon>Magnoliopsida</taxon>
        <taxon>eudicotyledons</taxon>
        <taxon>Gunneridae</taxon>
        <taxon>Pentapetalae</taxon>
        <taxon>rosids</taxon>
        <taxon>fabids</taxon>
        <taxon>Fabales</taxon>
        <taxon>Fabaceae</taxon>
        <taxon>Papilionoideae</taxon>
        <taxon>50 kb inversion clade</taxon>
        <taxon>NPAAA clade</taxon>
        <taxon>Hologalegina</taxon>
        <taxon>IRL clade</taxon>
        <taxon>Fabeae</taxon>
        <taxon>Pisum</taxon>
    </lineage>
</organism>
<dbReference type="EMBL" id="Y00468">
    <property type="protein sequence ID" value="CAA68531.1"/>
    <property type="molecule type" value="Genomic_DNA"/>
</dbReference>
<dbReference type="EMBL" id="X15645">
    <property type="protein sequence ID" value="CAA33666.1"/>
    <property type="molecule type" value="Genomic_DNA"/>
</dbReference>
<dbReference type="PIR" id="A27301">
    <property type="entry name" value="R5PM81"/>
</dbReference>
<dbReference type="RefSeq" id="YP_003587585.1">
    <property type="nucleotide sequence ID" value="NC_014057.1"/>
</dbReference>
<dbReference type="SMR" id="P07815"/>
<dbReference type="GeneID" id="9073140"/>
<dbReference type="GO" id="GO:0009507">
    <property type="term" value="C:chloroplast"/>
    <property type="evidence" value="ECO:0007669"/>
    <property type="project" value="UniProtKB-SubCell"/>
</dbReference>
<dbReference type="GO" id="GO:1990904">
    <property type="term" value="C:ribonucleoprotein complex"/>
    <property type="evidence" value="ECO:0007669"/>
    <property type="project" value="UniProtKB-KW"/>
</dbReference>
<dbReference type="GO" id="GO:0005840">
    <property type="term" value="C:ribosome"/>
    <property type="evidence" value="ECO:0007669"/>
    <property type="project" value="UniProtKB-KW"/>
</dbReference>
<dbReference type="GO" id="GO:0003735">
    <property type="term" value="F:structural constituent of ribosome"/>
    <property type="evidence" value="ECO:0007669"/>
    <property type="project" value="InterPro"/>
</dbReference>
<dbReference type="GO" id="GO:0006412">
    <property type="term" value="P:translation"/>
    <property type="evidence" value="ECO:0007669"/>
    <property type="project" value="UniProtKB-UniRule"/>
</dbReference>
<dbReference type="HAMAP" id="MF_00251">
    <property type="entry name" value="Ribosomal_bL36"/>
    <property type="match status" value="1"/>
</dbReference>
<dbReference type="InterPro" id="IPR000473">
    <property type="entry name" value="Ribosomal_bL36"/>
</dbReference>
<dbReference type="InterPro" id="IPR035977">
    <property type="entry name" value="Ribosomal_bL36_sp"/>
</dbReference>
<dbReference type="NCBIfam" id="TIGR01022">
    <property type="entry name" value="rpmJ_bact"/>
    <property type="match status" value="1"/>
</dbReference>
<dbReference type="PANTHER" id="PTHR42888">
    <property type="entry name" value="50S RIBOSOMAL PROTEIN L36, CHLOROPLASTIC"/>
    <property type="match status" value="1"/>
</dbReference>
<dbReference type="PANTHER" id="PTHR42888:SF1">
    <property type="entry name" value="LARGE RIBOSOMAL SUBUNIT PROTEIN BL36C"/>
    <property type="match status" value="1"/>
</dbReference>
<dbReference type="Pfam" id="PF00444">
    <property type="entry name" value="Ribosomal_L36"/>
    <property type="match status" value="1"/>
</dbReference>
<dbReference type="SUPFAM" id="SSF57840">
    <property type="entry name" value="Ribosomal protein L36"/>
    <property type="match status" value="1"/>
</dbReference>
<dbReference type="PROSITE" id="PS00828">
    <property type="entry name" value="RIBOSOMAL_L36"/>
    <property type="match status" value="1"/>
</dbReference>
<comment type="subcellular location">
    <subcellularLocation>
        <location>Plastid</location>
        <location>Chloroplast</location>
    </subcellularLocation>
</comment>
<comment type="similarity">
    <text evidence="1">Belongs to the bacterial ribosomal protein bL36 family.</text>
</comment>